<accession>P52265</accession>
<dbReference type="PIR" id="H61492">
    <property type="entry name" value="H61492"/>
</dbReference>
<dbReference type="SMR" id="P52265"/>
<dbReference type="iPTMnet" id="P52265"/>
<dbReference type="GO" id="GO:0005576">
    <property type="term" value="C:extracellular region"/>
    <property type="evidence" value="ECO:0007669"/>
    <property type="project" value="UniProtKB-SubCell"/>
</dbReference>
<dbReference type="GO" id="GO:0004867">
    <property type="term" value="F:serine-type endopeptidase inhibitor activity"/>
    <property type="evidence" value="ECO:0007669"/>
    <property type="project" value="UniProtKB-KW"/>
</dbReference>
<dbReference type="CDD" id="cd00104">
    <property type="entry name" value="KAZAL_FS"/>
    <property type="match status" value="1"/>
</dbReference>
<dbReference type="FunFam" id="3.30.60.30:FF:000037">
    <property type="entry name" value="Ovomucoid"/>
    <property type="match status" value="1"/>
</dbReference>
<dbReference type="Gene3D" id="3.30.60.30">
    <property type="match status" value="1"/>
</dbReference>
<dbReference type="InterPro" id="IPR051597">
    <property type="entry name" value="Bifunctional_prot_inhibitor"/>
</dbReference>
<dbReference type="InterPro" id="IPR002350">
    <property type="entry name" value="Kazal_dom"/>
</dbReference>
<dbReference type="InterPro" id="IPR036058">
    <property type="entry name" value="Kazal_dom_sf"/>
</dbReference>
<dbReference type="InterPro" id="IPR001239">
    <property type="entry name" value="Prot_inh_Kazal-m"/>
</dbReference>
<dbReference type="PANTHER" id="PTHR47729:SF1">
    <property type="entry name" value="OVOMUCOID-LIKE-RELATED"/>
    <property type="match status" value="1"/>
</dbReference>
<dbReference type="PANTHER" id="PTHR47729">
    <property type="entry name" value="SERINE PEPTIDASE INHIBITOR, KAZAL TYPE 2, TANDEM DUPLICATE 1-RELATED"/>
    <property type="match status" value="1"/>
</dbReference>
<dbReference type="Pfam" id="PF00050">
    <property type="entry name" value="Kazal_1"/>
    <property type="match status" value="1"/>
</dbReference>
<dbReference type="PRINTS" id="PR00290">
    <property type="entry name" value="KAZALINHBTR"/>
</dbReference>
<dbReference type="SMART" id="SM00280">
    <property type="entry name" value="KAZAL"/>
    <property type="match status" value="1"/>
</dbReference>
<dbReference type="SUPFAM" id="SSF100895">
    <property type="entry name" value="Kazal-type serine protease inhibitors"/>
    <property type="match status" value="1"/>
</dbReference>
<dbReference type="PROSITE" id="PS00282">
    <property type="entry name" value="KAZAL_1"/>
    <property type="match status" value="1"/>
</dbReference>
<dbReference type="PROSITE" id="PS51465">
    <property type="entry name" value="KAZAL_2"/>
    <property type="match status" value="1"/>
</dbReference>
<name>IOVO_CARPF</name>
<reference key="1">
    <citation type="journal article" date="1990" name="J. Protein Chem.">
        <title>Amino acid sequences of ovomucoid third domain from 25 additional species of birds.</title>
        <authorList>
            <person name="Laskowski M. Jr."/>
            <person name="Apostol I."/>
            <person name="Ardelt W."/>
            <person name="Cook J."/>
            <person name="Giletto A."/>
            <person name="Kelly C.A."/>
            <person name="Lu W."/>
            <person name="Park S.J."/>
            <person name="Qasim M.A."/>
            <person name="Whatley H.E."/>
            <person name="Wieczorek A."/>
            <person name="Wynn R."/>
        </authorList>
    </citation>
    <scope>PROTEIN SEQUENCE</scope>
</reference>
<feature type="chain" id="PRO_0000073168" description="Ovomucoid">
    <location>
        <begin position="1" status="less than"/>
        <end position="54" status="greater than"/>
    </location>
</feature>
<feature type="domain" description="Kazal-like" evidence="1">
    <location>
        <begin position="4"/>
        <end position="54"/>
    </location>
</feature>
<feature type="site" description="Reactive bond 3">
    <location>
        <begin position="16"/>
        <end position="17"/>
    </location>
</feature>
<feature type="glycosylation site" description="N-linked (GlcNAc...) asparagine" evidence="2">
    <location>
        <position position="43"/>
    </location>
</feature>
<feature type="disulfide bond">
    <location>
        <begin position="6"/>
        <end position="36"/>
    </location>
</feature>
<feature type="disulfide bond">
    <location>
        <begin position="14"/>
        <end position="33"/>
    </location>
</feature>
<feature type="disulfide bond">
    <location>
        <begin position="22"/>
        <end position="54"/>
    </location>
</feature>
<feature type="non-terminal residue">
    <location>
        <position position="1"/>
    </location>
</feature>
<feature type="non-terminal residue">
    <location>
        <position position="54"/>
    </location>
</feature>
<protein>
    <recommendedName>
        <fullName>Ovomucoid</fullName>
    </recommendedName>
</protein>
<keyword id="KW-0903">Direct protein sequencing</keyword>
<keyword id="KW-1015">Disulfide bond</keyword>
<keyword id="KW-0325">Glycoprotein</keyword>
<keyword id="KW-0646">Protease inhibitor</keyword>
<keyword id="KW-0677">Repeat</keyword>
<keyword id="KW-0964">Secreted</keyword>
<keyword id="KW-0722">Serine protease inhibitor</keyword>
<proteinExistence type="evidence at protein level"/>
<evidence type="ECO:0000255" key="1">
    <source>
        <dbReference type="PROSITE-ProRule" id="PRU00798"/>
    </source>
</evidence>
<evidence type="ECO:0000269" key="2">
    <source>
    </source>
</evidence>
<comment type="subcellular location">
    <subcellularLocation>
        <location>Secreted</location>
    </subcellularLocation>
</comment>
<comment type="domain">
    <text>Avian ovomucoid consists of three homologous, tandem Kazal family inhibitory domains.</text>
</comment>
<organism>
    <name type="scientific">Caracara plancus</name>
    <name type="common">Southern caracara</name>
    <name type="synonym">Polyborus plancus</name>
    <dbReference type="NCBI Taxonomy" id="8951"/>
    <lineage>
        <taxon>Eukaryota</taxon>
        <taxon>Metazoa</taxon>
        <taxon>Chordata</taxon>
        <taxon>Craniata</taxon>
        <taxon>Vertebrata</taxon>
        <taxon>Euteleostomi</taxon>
        <taxon>Archelosauria</taxon>
        <taxon>Archosauria</taxon>
        <taxon>Dinosauria</taxon>
        <taxon>Saurischia</taxon>
        <taxon>Theropoda</taxon>
        <taxon>Coelurosauria</taxon>
        <taxon>Aves</taxon>
        <taxon>Neognathae</taxon>
        <taxon>Neoaves</taxon>
        <taxon>Telluraves</taxon>
        <taxon>Australaves</taxon>
        <taxon>Falconiformes</taxon>
        <taxon>Falconidae</taxon>
        <taxon>Caracara</taxon>
    </lineage>
</organism>
<sequence length="54" mass="5830">VATVDCSEYPKPVCSLEYMPLCGSDSQTYSNECNFCNAVVDSNGTLTLSHFGKC</sequence>